<proteinExistence type="evidence at protein level"/>
<comment type="catalytic activity">
    <reaction evidence="2">
        <text>a beta-lactam + H2O = a substituted beta-amino acid</text>
        <dbReference type="Rhea" id="RHEA:20401"/>
        <dbReference type="ChEBI" id="CHEBI:15377"/>
        <dbReference type="ChEBI" id="CHEBI:35627"/>
        <dbReference type="ChEBI" id="CHEBI:140347"/>
        <dbReference type="EC" id="3.5.2.6"/>
    </reaction>
</comment>
<comment type="miscellaneous">
    <text evidence="6">The class A beta-lactamase family has a specific amino-acid numbering system, sometimes called Ambler or ABL numbering and often misspelt as Amber. A multiple sequence alignment was used to derive a consensus sequence and then the consensus was numbered taking into account insertions and deletions. This allows use of identical numbers, e.g. for active site residues, despite differences in protein length. UniProt always uses natural numbering of residues, hence there appear to be differences in numbering between this entry and some papers.</text>
</comment>
<comment type="similarity">
    <text evidence="5">Belongs to the class-A beta-lactamase family.</text>
</comment>
<reference key="1">
    <citation type="journal article" date="1999" name="Antimicrob. Agents Chemother.">
        <title>Automated thermal cycling is superior to traditional methods for nucleotide sequencing of bla(SHV) genes.</title>
        <authorList>
            <person name="Bradford P.A."/>
        </authorList>
    </citation>
    <scope>NUCLEOTIDE SEQUENCE [GENOMIC DNA]</scope>
    <source>
        <strain>ATCC 33694 / HB101</strain>
    </source>
</reference>
<reference key="2">
    <citation type="journal article" date="1988" name="Biochem. J.">
        <title>Complete amino acid sequence of p453-plasmid-mediated PIT-2 beta-lactamase (SHV-1).</title>
        <authorList>
            <person name="Barthelemy M."/>
            <person name="Peduzzi J."/>
            <person name="Labia R."/>
        </authorList>
    </citation>
    <scope>PROTEIN SEQUENCE OF 22-286</scope>
    <source>
        <plasmid>p453</plasmid>
    </source>
</reference>
<reference key="3">
    <citation type="journal article" date="1987" name="J. Antimicrob. Chemother.">
        <title>N-terminal amino acid sequence of PIT-2 beta-lactamase (SHV-1).</title>
        <authorList>
            <person name="Barthelemy M."/>
            <person name="Peduzzi J."/>
            <person name="Labia R."/>
        </authorList>
    </citation>
    <scope>PROTEIN SEQUENCE OF 22-128</scope>
    <source>
        <plasmid>p453</plasmid>
    </source>
</reference>
<reference key="4">
    <citation type="journal article" date="1991" name="Biochem. J.">
        <title>A standard numbering scheme for the class A beta-lactamases.</title>
        <authorList>
            <person name="Ambler R.P."/>
            <person name="Coulson A.F."/>
            <person name="Frere J.M."/>
            <person name="Ghuysen J.M."/>
            <person name="Joris B."/>
            <person name="Forsman M."/>
            <person name="Levesque R.C."/>
            <person name="Tiraby G."/>
            <person name="Waley S.G."/>
        </authorList>
    </citation>
    <scope>AMINO ACID NUMBERING SCHEME</scope>
</reference>
<feature type="signal peptide" evidence="3 4">
    <location>
        <begin position="1"/>
        <end position="21"/>
    </location>
</feature>
<feature type="chain" id="PRO_0000016980" description="Beta-lactamase SHV-1">
    <location>
        <begin position="22"/>
        <end position="286"/>
    </location>
</feature>
<feature type="active site" description="Acyl-ester intermediate" evidence="2">
    <location>
        <position position="66"/>
    </location>
</feature>
<feature type="active site" description="Proton acceptor" evidence="1">
    <location>
        <position position="164"/>
    </location>
</feature>
<feature type="binding site" evidence="1">
    <location>
        <begin position="230"/>
        <end position="232"/>
    </location>
    <ligand>
        <name>substrate</name>
    </ligand>
</feature>
<feature type="disulfide bond" evidence="1">
    <location>
        <begin position="73"/>
        <end position="119"/>
    </location>
</feature>
<feature type="sequence conflict" description="In Ref. 2; AA sequence." evidence="5" ref="2">
    <original>AT</original>
    <variation>TA</variation>
    <location>
        <begin position="136"/>
        <end position="137"/>
    </location>
</feature>
<dbReference type="EC" id="3.5.2.6"/>
<dbReference type="EMBL" id="AF148850">
    <property type="protein sequence ID" value="AAD37412.1"/>
    <property type="molecule type" value="Genomic_DNA"/>
</dbReference>
<dbReference type="SMR" id="P0AD63"/>
<dbReference type="BindingDB" id="P0AD63"/>
<dbReference type="ChEMBL" id="CHEMBL5956"/>
<dbReference type="DrugBank" id="DB03834">
    <property type="generic name" value="(3S)-3-(dioxidosulfanyl)-N-[(1Z)-3-oxoprop-1-en-1-yl]-4-(1H-1,2,3-triazol-1-yl)-D-valine"/>
</dbReference>
<dbReference type="DrugBank" id="DB03970">
    <property type="generic name" value="(7R)-7-(6,7-Dihydro-5H-cyclopenta[d]imidazo[2,1-b][1,3]thiazol-2-yl)-2,7-dihydro-1,4-thiazepine-3,6-dicarboxylic acid"/>
</dbReference>
<dbReference type="DrugBank" id="DB02579">
    <property type="generic name" value="Acrylic Acid"/>
</dbReference>
<dbReference type="DrugBank" id="DB09060">
    <property type="generic name" value="Avibactam"/>
</dbReference>
<dbReference type="DrugBank" id="DB03472">
    <property type="generic name" value="Cyclohexyl-Hexyl-Beta-D-Maltoside"/>
</dbReference>
<dbReference type="DrugBank" id="DB01598">
    <property type="generic name" value="Imipenem"/>
</dbReference>
<dbReference type="DrugBank" id="DB03057">
    <property type="generic name" value="Malonaldehyde"/>
</dbReference>
<dbReference type="DrugBank" id="DB12377">
    <property type="generic name" value="Relebactam"/>
</dbReference>
<dbReference type="DrugBank" id="DB01606">
    <property type="generic name" value="Tazobactam"/>
</dbReference>
<dbReference type="DrugBank" id="DB03445">
    <property type="generic name" value="Tazobactam trans-enamine intermediate"/>
</dbReference>
<dbReference type="DrugCentral" id="P0AD63"/>
<dbReference type="KEGG" id="ag:AAD37412"/>
<dbReference type="GO" id="GO:0008800">
    <property type="term" value="F:beta-lactamase activity"/>
    <property type="evidence" value="ECO:0007669"/>
    <property type="project" value="UniProtKB-EC"/>
</dbReference>
<dbReference type="GO" id="GO:0030655">
    <property type="term" value="P:beta-lactam antibiotic catabolic process"/>
    <property type="evidence" value="ECO:0007669"/>
    <property type="project" value="InterPro"/>
</dbReference>
<dbReference type="GO" id="GO:0046677">
    <property type="term" value="P:response to antibiotic"/>
    <property type="evidence" value="ECO:0007669"/>
    <property type="project" value="UniProtKB-KW"/>
</dbReference>
<dbReference type="Gene3D" id="3.40.710.10">
    <property type="entry name" value="DD-peptidase/beta-lactamase superfamily"/>
    <property type="match status" value="1"/>
</dbReference>
<dbReference type="InterPro" id="IPR012338">
    <property type="entry name" value="Beta-lactam/transpept-like"/>
</dbReference>
<dbReference type="InterPro" id="IPR045155">
    <property type="entry name" value="Beta-lactam_cat"/>
</dbReference>
<dbReference type="InterPro" id="IPR000871">
    <property type="entry name" value="Beta-lactam_class-A"/>
</dbReference>
<dbReference type="InterPro" id="IPR023650">
    <property type="entry name" value="Beta-lactam_class-A_AS"/>
</dbReference>
<dbReference type="NCBIfam" id="NF033103">
    <property type="entry name" value="bla_class_A"/>
    <property type="match status" value="1"/>
</dbReference>
<dbReference type="NCBIfam" id="NF000285">
    <property type="entry name" value="SHV"/>
    <property type="match status" value="1"/>
</dbReference>
<dbReference type="NCBIfam" id="NF012143">
    <property type="entry name" value="SHV_LEN_OKP"/>
    <property type="match status" value="1"/>
</dbReference>
<dbReference type="PANTHER" id="PTHR35333">
    <property type="entry name" value="BETA-LACTAMASE"/>
    <property type="match status" value="1"/>
</dbReference>
<dbReference type="PANTHER" id="PTHR35333:SF3">
    <property type="entry name" value="BETA-LACTAMASE-TYPE TRANSPEPTIDASE FOLD CONTAINING PROTEIN"/>
    <property type="match status" value="1"/>
</dbReference>
<dbReference type="Pfam" id="PF13354">
    <property type="entry name" value="Beta-lactamase2"/>
    <property type="match status" value="1"/>
</dbReference>
<dbReference type="PRINTS" id="PR00118">
    <property type="entry name" value="BLACTAMASEA"/>
</dbReference>
<dbReference type="SUPFAM" id="SSF56601">
    <property type="entry name" value="beta-lactamase/transpeptidase-like"/>
    <property type="match status" value="1"/>
</dbReference>
<dbReference type="PROSITE" id="PS00146">
    <property type="entry name" value="BETA_LACTAMASE_A"/>
    <property type="match status" value="1"/>
</dbReference>
<protein>
    <recommendedName>
        <fullName>Beta-lactamase SHV-1</fullName>
        <ecNumber>3.5.2.6</ecNumber>
    </recommendedName>
    <alternativeName>
        <fullName>PIT-2</fullName>
    </alternativeName>
</protein>
<keyword id="KW-0046">Antibiotic resistance</keyword>
<keyword id="KW-0903">Direct protein sequencing</keyword>
<keyword id="KW-1015">Disulfide bond</keyword>
<keyword id="KW-0378">Hydrolase</keyword>
<keyword id="KW-0614">Plasmid</keyword>
<keyword id="KW-0732">Signal</keyword>
<name>BLA1_ECOLX</name>
<evidence type="ECO:0000250" key="1"/>
<evidence type="ECO:0000255" key="2">
    <source>
        <dbReference type="PROSITE-ProRule" id="PRU10101"/>
    </source>
</evidence>
<evidence type="ECO:0000269" key="3">
    <source>
    </source>
</evidence>
<evidence type="ECO:0000269" key="4">
    <source>
    </source>
</evidence>
<evidence type="ECO:0000305" key="5"/>
<evidence type="ECO:0000305" key="6">
    <source>
    </source>
</evidence>
<accession>P0AD63</accession>
<accession>O07941</accession>
<accession>P14557</accession>
<accession>P23982</accession>
<organism>
    <name type="scientific">Escherichia coli</name>
    <dbReference type="NCBI Taxonomy" id="562"/>
    <lineage>
        <taxon>Bacteria</taxon>
        <taxon>Pseudomonadati</taxon>
        <taxon>Pseudomonadota</taxon>
        <taxon>Gammaproteobacteria</taxon>
        <taxon>Enterobacterales</taxon>
        <taxon>Enterobacteriaceae</taxon>
        <taxon>Escherichia</taxon>
    </lineage>
</organism>
<gene>
    <name type="primary">bla</name>
    <name type="synonym">shv1</name>
</gene>
<sequence length="286" mass="31224">MRYIRLCIISLLATLPLAVHASPQPLEQIKLSESQLSGRVGMIEMDLASGRTLTAWRADERFPMMSTFKVVLCGAVLARVDAGDEQLERKIHYRQQDLVDYSPVSEKHLADGMTVGELCAAAITMSDNSAANLLLATVGGPAGLTAFLRQIGDNVTRLDRWETELNEALPGDARDTTTPASMAATLRKLLTSQRLSARSQRQLLQWMVDDRVAGPLIRSVLPAGWFIADKTGAGERGARGIVALLGPNNKAERIVVIYLRDTPASMAERNQQIAGIGAALIEHWQR</sequence>
<geneLocation type="plasmid">
    <name>p453</name>
</geneLocation>